<protein>
    <recommendedName>
        <fullName>Probable glycogen synthase</fullName>
        <ecNumber>2.4.1.21</ecNumber>
    </recommendedName>
    <alternativeName>
        <fullName>Starch [bacterial glycogen] synthase</fullName>
    </alternativeName>
</protein>
<accession>Q59001</accession>
<name>GLGA_METJA</name>
<gene>
    <name type="primary">glgA</name>
    <name type="ordered locus">MJ1606</name>
</gene>
<keyword id="KW-0320">Glycogen biosynthesis</keyword>
<keyword id="KW-0328">Glycosyltransferase</keyword>
<keyword id="KW-1185">Reference proteome</keyword>
<keyword id="KW-0808">Transferase</keyword>
<organism>
    <name type="scientific">Methanocaldococcus jannaschii (strain ATCC 43067 / DSM 2661 / JAL-1 / JCM 10045 / NBRC 100440)</name>
    <name type="common">Methanococcus jannaschii</name>
    <dbReference type="NCBI Taxonomy" id="243232"/>
    <lineage>
        <taxon>Archaea</taxon>
        <taxon>Methanobacteriati</taxon>
        <taxon>Methanobacteriota</taxon>
        <taxon>Methanomada group</taxon>
        <taxon>Methanococci</taxon>
        <taxon>Methanococcales</taxon>
        <taxon>Methanocaldococcaceae</taxon>
        <taxon>Methanocaldococcus</taxon>
    </lineage>
</organism>
<reference key="1">
    <citation type="journal article" date="1996" name="Science">
        <title>Complete genome sequence of the methanogenic archaeon, Methanococcus jannaschii.</title>
        <authorList>
            <person name="Bult C.J."/>
            <person name="White O."/>
            <person name="Olsen G.J."/>
            <person name="Zhou L."/>
            <person name="Fleischmann R.D."/>
            <person name="Sutton G.G."/>
            <person name="Blake J.A."/>
            <person name="FitzGerald L.M."/>
            <person name="Clayton R.A."/>
            <person name="Gocayne J.D."/>
            <person name="Kerlavage A.R."/>
            <person name="Dougherty B.A."/>
            <person name="Tomb J.-F."/>
            <person name="Adams M.D."/>
            <person name="Reich C.I."/>
            <person name="Overbeek R."/>
            <person name="Kirkness E.F."/>
            <person name="Weinstock K.G."/>
            <person name="Merrick J.M."/>
            <person name="Glodek A."/>
            <person name="Scott J.L."/>
            <person name="Geoghagen N.S.M."/>
            <person name="Weidman J.F."/>
            <person name="Fuhrmann J.L."/>
            <person name="Nguyen D."/>
            <person name="Utterback T.R."/>
            <person name="Kelley J.M."/>
            <person name="Peterson J.D."/>
            <person name="Sadow P.W."/>
            <person name="Hanna M.C."/>
            <person name="Cotton M.D."/>
            <person name="Roberts K.M."/>
            <person name="Hurst M.A."/>
            <person name="Kaine B.P."/>
            <person name="Borodovsky M."/>
            <person name="Klenk H.-P."/>
            <person name="Fraser C.M."/>
            <person name="Smith H.O."/>
            <person name="Woese C.R."/>
            <person name="Venter J.C."/>
        </authorList>
    </citation>
    <scope>NUCLEOTIDE SEQUENCE [LARGE SCALE GENOMIC DNA]</scope>
    <source>
        <strain>ATCC 43067 / DSM 2661 / JAL-1 / JCM 10045 / NBRC 100440</strain>
    </source>
</reference>
<feature type="chain" id="PRO_0000188668" description="Probable glycogen synthase">
    <location>
        <begin position="1"/>
        <end position="521"/>
    </location>
</feature>
<proteinExistence type="inferred from homology"/>
<evidence type="ECO:0000250" key="1"/>
<evidence type="ECO:0000305" key="2"/>
<dbReference type="EC" id="2.4.1.21"/>
<dbReference type="EMBL" id="L77117">
    <property type="protein sequence ID" value="AAB99625.1"/>
    <property type="molecule type" value="Genomic_DNA"/>
</dbReference>
<dbReference type="PIR" id="E64500">
    <property type="entry name" value="E64500"/>
</dbReference>
<dbReference type="RefSeq" id="WP_010871131.1">
    <property type="nucleotide sequence ID" value="NC_000909.1"/>
</dbReference>
<dbReference type="SMR" id="Q59001"/>
<dbReference type="FunCoup" id="Q59001">
    <property type="interactions" value="9"/>
</dbReference>
<dbReference type="STRING" id="243232.MJ_1606"/>
<dbReference type="CAZy" id="GT5">
    <property type="family name" value="Glycosyltransferase Family 5"/>
</dbReference>
<dbReference type="PaxDb" id="243232-MJ_1606"/>
<dbReference type="EnsemblBacteria" id="AAB99625">
    <property type="protein sequence ID" value="AAB99625"/>
    <property type="gene ID" value="MJ_1606"/>
</dbReference>
<dbReference type="GeneID" id="1452515"/>
<dbReference type="KEGG" id="mja:MJ_1606"/>
<dbReference type="eggNOG" id="arCOG01420">
    <property type="taxonomic scope" value="Archaea"/>
</dbReference>
<dbReference type="HOGENOM" id="CLU_545885_0_0_2"/>
<dbReference type="InParanoid" id="Q59001"/>
<dbReference type="OrthoDB" id="132546at2157"/>
<dbReference type="PhylomeDB" id="Q59001"/>
<dbReference type="UniPathway" id="UPA00164"/>
<dbReference type="Proteomes" id="UP000000805">
    <property type="component" value="Chromosome"/>
</dbReference>
<dbReference type="GO" id="GO:0009011">
    <property type="term" value="F:alpha-1,4-glucan glucosyltransferase (ADP-glucose donor) activity"/>
    <property type="evidence" value="ECO:0007669"/>
    <property type="project" value="UniProtKB-UniRule"/>
</dbReference>
<dbReference type="GO" id="GO:0004373">
    <property type="term" value="F:alpha-1,4-glucan glucosyltransferase (UDP-glucose donor) activity"/>
    <property type="evidence" value="ECO:0007669"/>
    <property type="project" value="InterPro"/>
</dbReference>
<dbReference type="GO" id="GO:0005978">
    <property type="term" value="P:glycogen biosynthetic process"/>
    <property type="evidence" value="ECO:0007669"/>
    <property type="project" value="UniProtKB-UniRule"/>
</dbReference>
<dbReference type="Gene3D" id="3.40.50.2000">
    <property type="entry name" value="Glycogen Phosphorylase B"/>
    <property type="match status" value="2"/>
</dbReference>
<dbReference type="HAMAP" id="MF_00484">
    <property type="entry name" value="Glycogen_synth"/>
    <property type="match status" value="1"/>
</dbReference>
<dbReference type="InterPro" id="IPR001296">
    <property type="entry name" value="Glyco_trans_1"/>
</dbReference>
<dbReference type="InterPro" id="IPR011835">
    <property type="entry name" value="GS/SS"/>
</dbReference>
<dbReference type="InterPro" id="IPR013534">
    <property type="entry name" value="Starch_synth_cat_dom"/>
</dbReference>
<dbReference type="PANTHER" id="PTHR45825:SF11">
    <property type="entry name" value="ALPHA AMYLASE DOMAIN-CONTAINING PROTEIN"/>
    <property type="match status" value="1"/>
</dbReference>
<dbReference type="PANTHER" id="PTHR45825">
    <property type="entry name" value="GRANULE-BOUND STARCH SYNTHASE 1, CHLOROPLASTIC/AMYLOPLASTIC"/>
    <property type="match status" value="1"/>
</dbReference>
<dbReference type="Pfam" id="PF08323">
    <property type="entry name" value="Glyco_transf_5"/>
    <property type="match status" value="1"/>
</dbReference>
<dbReference type="Pfam" id="PF00534">
    <property type="entry name" value="Glycos_transf_1"/>
    <property type="match status" value="1"/>
</dbReference>
<dbReference type="SUPFAM" id="SSF53756">
    <property type="entry name" value="UDP-Glycosyltransferase/glycogen phosphorylase"/>
    <property type="match status" value="1"/>
</dbReference>
<sequence>MKIVILAPTITPIVSYGGLGDVMRDLPKFLKKGNEVVVLTLNHYNRYFTLPYEDIKKITVIYKGAKITFDVLRTKHPTTGVDLIVFSNESVNNLNVWDPIKYEIFADLVITYLDEVKDIDVVSGHDWMCGLAIAKCNDILDLPTTLTIHNEAFKGEMIEYKGEVMTFLELGIKYADAVNTVSPSHAEEIKNYPYIKKYLNNKPFCGILNGIDIDEYDPMKIIERMCNLSNNKLDPRNYAYISPYSAEDSHNIKPKIKYSWFYRGGVYEYVEDWNKIDKGISATDVEVHGGVDGDIETPLIGFVGRATHQKGFNTMFEAIPELLEKHDIRFVFLTKGDRDIEERLKNLANEHDGRILALIGYSLPLSSLVFAGSDWIIMPSYWEPCGLVQMEAMAYCTPVIATETGGLKDTIIPLHPNPYEHPNFDKATGVLFKVPDKVGFMWGVEHALNWTFYKLNEICMFMQYIRYKCPKHPYDENSPLSMMMKNCYYHVFRNLSWQNSPSIRKYKGLFGGAIYNHYLQP</sequence>
<comment type="function">
    <text evidence="1">Synthesizes alpha-1,4-glucan chains using ADP-glucose.</text>
</comment>
<comment type="catalytic activity">
    <reaction>
        <text>[(1-&gt;4)-alpha-D-glucosyl](n) + ADP-alpha-D-glucose = [(1-&gt;4)-alpha-D-glucosyl](n+1) + ADP + H(+)</text>
        <dbReference type="Rhea" id="RHEA:18189"/>
        <dbReference type="Rhea" id="RHEA-COMP:9584"/>
        <dbReference type="Rhea" id="RHEA-COMP:9587"/>
        <dbReference type="ChEBI" id="CHEBI:15378"/>
        <dbReference type="ChEBI" id="CHEBI:15444"/>
        <dbReference type="ChEBI" id="CHEBI:57498"/>
        <dbReference type="ChEBI" id="CHEBI:456216"/>
        <dbReference type="EC" id="2.4.1.21"/>
    </reaction>
</comment>
<comment type="pathway">
    <text>Glycan biosynthesis; glycogen biosynthesis.</text>
</comment>
<comment type="similarity">
    <text evidence="2">Belongs to the glycosyltransferase 1 family. Bacterial/plant glycogen synthase subfamily.</text>
</comment>
<comment type="caution">
    <text evidence="2">Could lack activity as the potential ADP-glucose binding site Arg/Lys residue in position 15 is replaced by an Ser.</text>
</comment>